<reference key="1">
    <citation type="journal article" date="1998" name="Zool. Sci.">
        <title>The complete sequence of mitochondrial genome from a gynogenetic triploid 'ginbuna' (Carassius auratus langsdorfi).</title>
        <authorList>
            <person name="Murakami M."/>
            <person name="Yamashita Y."/>
            <person name="Fujitani H."/>
        </authorList>
    </citation>
    <scope>NUCLEOTIDE SEQUENCE [GENOMIC DNA]</scope>
    <source>
        <strain>AZ3 / Langsdorfi</strain>
        <tissue>Oocyte</tissue>
    </source>
</reference>
<name>CYB_CARAU</name>
<organism>
    <name type="scientific">Carassius auratus</name>
    <name type="common">Goldfish</name>
    <dbReference type="NCBI Taxonomy" id="7957"/>
    <lineage>
        <taxon>Eukaryota</taxon>
        <taxon>Metazoa</taxon>
        <taxon>Chordata</taxon>
        <taxon>Craniata</taxon>
        <taxon>Vertebrata</taxon>
        <taxon>Euteleostomi</taxon>
        <taxon>Actinopterygii</taxon>
        <taxon>Neopterygii</taxon>
        <taxon>Teleostei</taxon>
        <taxon>Ostariophysi</taxon>
        <taxon>Cypriniformes</taxon>
        <taxon>Cyprinidae</taxon>
        <taxon>Cyprininae</taxon>
        <taxon>Carassius</taxon>
    </lineage>
</organism>
<evidence type="ECO:0000250" key="1"/>
<evidence type="ECO:0000250" key="2">
    <source>
        <dbReference type="UniProtKB" id="P00157"/>
    </source>
</evidence>
<evidence type="ECO:0000255" key="3">
    <source>
        <dbReference type="PROSITE-ProRule" id="PRU00967"/>
    </source>
</evidence>
<evidence type="ECO:0000255" key="4">
    <source>
        <dbReference type="PROSITE-ProRule" id="PRU00968"/>
    </source>
</evidence>
<dbReference type="EMBL" id="AB006953">
    <property type="protein sequence ID" value="BAA31250.1"/>
    <property type="molecule type" value="Genomic_DNA"/>
</dbReference>
<dbReference type="RefSeq" id="NP_008600.1">
    <property type="nucleotide sequence ID" value="NC_002079.1"/>
</dbReference>
<dbReference type="SMR" id="O78690"/>
<dbReference type="GeneID" id="808423"/>
<dbReference type="CTD" id="4519"/>
<dbReference type="OrthoDB" id="244at2759"/>
<dbReference type="Proteomes" id="UP000515129">
    <property type="component" value="Mitochondrion MT"/>
</dbReference>
<dbReference type="GO" id="GO:0005743">
    <property type="term" value="C:mitochondrial inner membrane"/>
    <property type="evidence" value="ECO:0007669"/>
    <property type="project" value="UniProtKB-SubCell"/>
</dbReference>
<dbReference type="GO" id="GO:0045275">
    <property type="term" value="C:respiratory chain complex III"/>
    <property type="evidence" value="ECO:0007669"/>
    <property type="project" value="InterPro"/>
</dbReference>
<dbReference type="GO" id="GO:0046872">
    <property type="term" value="F:metal ion binding"/>
    <property type="evidence" value="ECO:0007669"/>
    <property type="project" value="UniProtKB-KW"/>
</dbReference>
<dbReference type="GO" id="GO:0008121">
    <property type="term" value="F:ubiquinol-cytochrome-c reductase activity"/>
    <property type="evidence" value="ECO:0007669"/>
    <property type="project" value="InterPro"/>
</dbReference>
<dbReference type="GO" id="GO:0006122">
    <property type="term" value="P:mitochondrial electron transport, ubiquinol to cytochrome c"/>
    <property type="evidence" value="ECO:0007669"/>
    <property type="project" value="TreeGrafter"/>
</dbReference>
<dbReference type="CDD" id="cd00290">
    <property type="entry name" value="cytochrome_b_C"/>
    <property type="match status" value="1"/>
</dbReference>
<dbReference type="CDD" id="cd00284">
    <property type="entry name" value="Cytochrome_b_N"/>
    <property type="match status" value="1"/>
</dbReference>
<dbReference type="FunFam" id="1.20.810.10:FF:000002">
    <property type="entry name" value="Cytochrome b"/>
    <property type="match status" value="1"/>
</dbReference>
<dbReference type="Gene3D" id="1.20.810.10">
    <property type="entry name" value="Cytochrome Bc1 Complex, Chain C"/>
    <property type="match status" value="1"/>
</dbReference>
<dbReference type="InterPro" id="IPR005798">
    <property type="entry name" value="Cyt_b/b6_C"/>
</dbReference>
<dbReference type="InterPro" id="IPR036150">
    <property type="entry name" value="Cyt_b/b6_C_sf"/>
</dbReference>
<dbReference type="InterPro" id="IPR005797">
    <property type="entry name" value="Cyt_b/b6_N"/>
</dbReference>
<dbReference type="InterPro" id="IPR027387">
    <property type="entry name" value="Cytb/b6-like_sf"/>
</dbReference>
<dbReference type="InterPro" id="IPR030689">
    <property type="entry name" value="Cytochrome_b"/>
</dbReference>
<dbReference type="InterPro" id="IPR048260">
    <property type="entry name" value="Cytochrome_b_C_euk/bac"/>
</dbReference>
<dbReference type="InterPro" id="IPR048259">
    <property type="entry name" value="Cytochrome_b_N_euk/bac"/>
</dbReference>
<dbReference type="InterPro" id="IPR016174">
    <property type="entry name" value="Di-haem_cyt_TM"/>
</dbReference>
<dbReference type="PANTHER" id="PTHR19271">
    <property type="entry name" value="CYTOCHROME B"/>
    <property type="match status" value="1"/>
</dbReference>
<dbReference type="PANTHER" id="PTHR19271:SF16">
    <property type="entry name" value="CYTOCHROME B"/>
    <property type="match status" value="1"/>
</dbReference>
<dbReference type="Pfam" id="PF00032">
    <property type="entry name" value="Cytochrom_B_C"/>
    <property type="match status" value="1"/>
</dbReference>
<dbReference type="Pfam" id="PF00033">
    <property type="entry name" value="Cytochrome_B"/>
    <property type="match status" value="1"/>
</dbReference>
<dbReference type="PIRSF" id="PIRSF038885">
    <property type="entry name" value="COB"/>
    <property type="match status" value="1"/>
</dbReference>
<dbReference type="SUPFAM" id="SSF81648">
    <property type="entry name" value="a domain/subunit of cytochrome bc1 complex (Ubiquinol-cytochrome c reductase)"/>
    <property type="match status" value="1"/>
</dbReference>
<dbReference type="SUPFAM" id="SSF81342">
    <property type="entry name" value="Transmembrane di-heme cytochromes"/>
    <property type="match status" value="1"/>
</dbReference>
<dbReference type="PROSITE" id="PS51003">
    <property type="entry name" value="CYTB_CTER"/>
    <property type="match status" value="1"/>
</dbReference>
<dbReference type="PROSITE" id="PS51002">
    <property type="entry name" value="CYTB_NTER"/>
    <property type="match status" value="1"/>
</dbReference>
<comment type="function">
    <text evidence="2">Component of the ubiquinol-cytochrome c reductase complex (complex III or cytochrome b-c1 complex) that is part of the mitochondrial respiratory chain. The b-c1 complex mediates electron transfer from ubiquinol to cytochrome c. Contributes to the generation of a proton gradient across the mitochondrial membrane that is then used for ATP synthesis.</text>
</comment>
<comment type="cofactor">
    <cofactor evidence="2">
        <name>heme b</name>
        <dbReference type="ChEBI" id="CHEBI:60344"/>
    </cofactor>
    <text evidence="2">Binds 2 heme b groups non-covalently.</text>
</comment>
<comment type="subunit">
    <text evidence="2">The cytochrome bc1 complex contains 3 respiratory subunits (MT-CYB, CYC1 and UQCRFS1), 2 core proteins (UQCRC1 and UQCRC2) and probably 6 low-molecular weight proteins.</text>
</comment>
<comment type="subcellular location">
    <subcellularLocation>
        <location evidence="2">Mitochondrion inner membrane</location>
        <topology evidence="2">Multi-pass membrane protein</topology>
    </subcellularLocation>
</comment>
<comment type="miscellaneous">
    <text evidence="1">Heme 1 (or BL or b562) is low-potential and absorbs at about 562 nm, and heme 2 (or BH or b566) is high-potential and absorbs at about 566 nm.</text>
</comment>
<comment type="similarity">
    <text evidence="3 4">Belongs to the cytochrome b family.</text>
</comment>
<comment type="caution">
    <text evidence="2">The full-length protein contains only eight transmembrane helices, not nine as predicted by bioinformatics tools.</text>
</comment>
<keyword id="KW-0249">Electron transport</keyword>
<keyword id="KW-0349">Heme</keyword>
<keyword id="KW-0408">Iron</keyword>
<keyword id="KW-0472">Membrane</keyword>
<keyword id="KW-0479">Metal-binding</keyword>
<keyword id="KW-0496">Mitochondrion</keyword>
<keyword id="KW-0999">Mitochondrion inner membrane</keyword>
<keyword id="KW-1185">Reference proteome</keyword>
<keyword id="KW-0679">Respiratory chain</keyword>
<keyword id="KW-0812">Transmembrane</keyword>
<keyword id="KW-1133">Transmembrane helix</keyword>
<keyword id="KW-0813">Transport</keyword>
<keyword id="KW-0830">Ubiquinone</keyword>
<gene>
    <name type="primary">mt-cyb</name>
    <name type="synonym">cob</name>
    <name type="synonym">cytb</name>
    <name type="synonym">mtcyb</name>
</gene>
<feature type="chain" id="PRO_0000060732" description="Cytochrome b">
    <location>
        <begin position="1"/>
        <end position="380"/>
    </location>
</feature>
<feature type="transmembrane region" description="Helical" evidence="2">
    <location>
        <begin position="33"/>
        <end position="53"/>
    </location>
</feature>
<feature type="transmembrane region" description="Helical" evidence="2">
    <location>
        <begin position="77"/>
        <end position="98"/>
    </location>
</feature>
<feature type="transmembrane region" description="Helical" evidence="2">
    <location>
        <begin position="113"/>
        <end position="133"/>
    </location>
</feature>
<feature type="transmembrane region" description="Helical" evidence="2">
    <location>
        <begin position="178"/>
        <end position="198"/>
    </location>
</feature>
<feature type="transmembrane region" description="Helical" evidence="2">
    <location>
        <begin position="226"/>
        <end position="246"/>
    </location>
</feature>
<feature type="transmembrane region" description="Helical" evidence="2">
    <location>
        <begin position="288"/>
        <end position="308"/>
    </location>
</feature>
<feature type="transmembrane region" description="Helical" evidence="2">
    <location>
        <begin position="320"/>
        <end position="340"/>
    </location>
</feature>
<feature type="transmembrane region" description="Helical" evidence="2">
    <location>
        <begin position="347"/>
        <end position="367"/>
    </location>
</feature>
<feature type="binding site" description="axial binding residue" evidence="2">
    <location>
        <position position="83"/>
    </location>
    <ligand>
        <name>heme b</name>
        <dbReference type="ChEBI" id="CHEBI:60344"/>
        <label>b562</label>
    </ligand>
    <ligandPart>
        <name>Fe</name>
        <dbReference type="ChEBI" id="CHEBI:18248"/>
    </ligandPart>
</feature>
<feature type="binding site" description="axial binding residue" evidence="2">
    <location>
        <position position="97"/>
    </location>
    <ligand>
        <name>heme b</name>
        <dbReference type="ChEBI" id="CHEBI:60344"/>
        <label>b566</label>
    </ligand>
    <ligandPart>
        <name>Fe</name>
        <dbReference type="ChEBI" id="CHEBI:18248"/>
    </ligandPart>
</feature>
<feature type="binding site" description="axial binding residue" evidence="2">
    <location>
        <position position="182"/>
    </location>
    <ligand>
        <name>heme b</name>
        <dbReference type="ChEBI" id="CHEBI:60344"/>
        <label>b562</label>
    </ligand>
    <ligandPart>
        <name>Fe</name>
        <dbReference type="ChEBI" id="CHEBI:18248"/>
    </ligandPart>
</feature>
<feature type="binding site" description="axial binding residue" evidence="2">
    <location>
        <position position="196"/>
    </location>
    <ligand>
        <name>heme b</name>
        <dbReference type="ChEBI" id="CHEBI:60344"/>
        <label>b566</label>
    </ligand>
    <ligandPart>
        <name>Fe</name>
        <dbReference type="ChEBI" id="CHEBI:18248"/>
    </ligandPart>
</feature>
<feature type="binding site" evidence="2">
    <location>
        <position position="201"/>
    </location>
    <ligand>
        <name>a ubiquinone</name>
        <dbReference type="ChEBI" id="CHEBI:16389"/>
    </ligand>
</feature>
<sequence>MASLRKTHPLIKIANDALVDLPTPSNISAWWNFGSLLGLCLITQILTGLFLAMHYTSDISTAFSSVTHICRDVNYGWLIRNIHANGASFFFICIYMHIARGLYYGSYLYKETWNIGVVLLLLVMMTAFVGYVLPWGQMSFWGATVITNLLSAVPYMGDMLVQWIWGGFSVDNATLTRFFAFHFLLPFIIAAATVIHLLFLHETGSNNPIGLNSDADKISFHPYFSYKDLLGFVIMLLALTLLALFSPNLLGDPENFTPANPLVTPPHIKPEWYFLFAYAILRSIPNKLGGVLALLFSILVLMVVPLLHTSKQRGLTFRPITQFLFWTLVADMIILTWIGGMPVEHPFIIIGQIASVLYFALFLVLFPLAGWLENKALKWA</sequence>
<geneLocation type="mitochondrion"/>
<protein>
    <recommendedName>
        <fullName>Cytochrome b</fullName>
    </recommendedName>
    <alternativeName>
        <fullName>Complex III subunit 3</fullName>
    </alternativeName>
    <alternativeName>
        <fullName>Complex III subunit III</fullName>
    </alternativeName>
    <alternativeName>
        <fullName>Cytochrome b-c1 complex subunit 3</fullName>
    </alternativeName>
    <alternativeName>
        <fullName>Ubiquinol-cytochrome-c reductase complex cytochrome b subunit</fullName>
    </alternativeName>
</protein>
<proteinExistence type="inferred from homology"/>
<accession>O78690</accession>